<organism>
    <name type="scientific">Shewanella amazonensis (strain ATCC BAA-1098 / SB2B)</name>
    <dbReference type="NCBI Taxonomy" id="326297"/>
    <lineage>
        <taxon>Bacteria</taxon>
        <taxon>Pseudomonadati</taxon>
        <taxon>Pseudomonadota</taxon>
        <taxon>Gammaproteobacteria</taxon>
        <taxon>Alteromonadales</taxon>
        <taxon>Shewanellaceae</taxon>
        <taxon>Shewanella</taxon>
    </lineage>
</organism>
<feature type="chain" id="PRO_1000073668" description="Tyrosine recombinase XerC">
    <location>
        <begin position="1"/>
        <end position="296"/>
    </location>
</feature>
<feature type="domain" description="Core-binding (CB)" evidence="3">
    <location>
        <begin position="2"/>
        <end position="85"/>
    </location>
</feature>
<feature type="domain" description="Tyr recombinase" evidence="2">
    <location>
        <begin position="106"/>
        <end position="285"/>
    </location>
</feature>
<feature type="active site" evidence="1">
    <location>
        <position position="145"/>
    </location>
</feature>
<feature type="active site" evidence="1">
    <location>
        <position position="169"/>
    </location>
</feature>
<feature type="active site" evidence="1">
    <location>
        <position position="237"/>
    </location>
</feature>
<feature type="active site" evidence="1">
    <location>
        <position position="240"/>
    </location>
</feature>
<feature type="active site" evidence="1">
    <location>
        <position position="263"/>
    </location>
</feature>
<feature type="active site" description="O-(3'-phospho-DNA)-tyrosine intermediate" evidence="1">
    <location>
        <position position="272"/>
    </location>
</feature>
<protein>
    <recommendedName>
        <fullName evidence="1">Tyrosine recombinase XerC</fullName>
    </recommendedName>
</protein>
<evidence type="ECO:0000255" key="1">
    <source>
        <dbReference type="HAMAP-Rule" id="MF_01808"/>
    </source>
</evidence>
<evidence type="ECO:0000255" key="2">
    <source>
        <dbReference type="PROSITE-ProRule" id="PRU01246"/>
    </source>
</evidence>
<evidence type="ECO:0000255" key="3">
    <source>
        <dbReference type="PROSITE-ProRule" id="PRU01248"/>
    </source>
</evidence>
<gene>
    <name evidence="1" type="primary">xerC</name>
    <name type="ordered locus">Sama_3247</name>
</gene>
<name>XERC_SHEAM</name>
<keyword id="KW-0131">Cell cycle</keyword>
<keyword id="KW-0132">Cell division</keyword>
<keyword id="KW-0159">Chromosome partition</keyword>
<keyword id="KW-0963">Cytoplasm</keyword>
<keyword id="KW-0229">DNA integration</keyword>
<keyword id="KW-0233">DNA recombination</keyword>
<keyword id="KW-0238">DNA-binding</keyword>
<keyword id="KW-1185">Reference proteome</keyword>
<proteinExistence type="inferred from homology"/>
<reference key="1">
    <citation type="submission" date="2006-12" db="EMBL/GenBank/DDBJ databases">
        <title>Complete sequence of Shewanella amazonensis SB2B.</title>
        <authorList>
            <consortium name="US DOE Joint Genome Institute"/>
            <person name="Copeland A."/>
            <person name="Lucas S."/>
            <person name="Lapidus A."/>
            <person name="Barry K."/>
            <person name="Detter J.C."/>
            <person name="Glavina del Rio T."/>
            <person name="Hammon N."/>
            <person name="Israni S."/>
            <person name="Dalin E."/>
            <person name="Tice H."/>
            <person name="Pitluck S."/>
            <person name="Munk A.C."/>
            <person name="Brettin T."/>
            <person name="Bruce D."/>
            <person name="Han C."/>
            <person name="Tapia R."/>
            <person name="Gilna P."/>
            <person name="Schmutz J."/>
            <person name="Larimer F."/>
            <person name="Land M."/>
            <person name="Hauser L."/>
            <person name="Kyrpides N."/>
            <person name="Mikhailova N."/>
            <person name="Fredrickson J."/>
            <person name="Richardson P."/>
        </authorList>
    </citation>
    <scope>NUCLEOTIDE SEQUENCE [LARGE SCALE GENOMIC DNA]</scope>
    <source>
        <strain>ATCC BAA-1098 / SB2B</strain>
    </source>
</reference>
<accession>A1SAP3</accession>
<dbReference type="EMBL" id="CP000507">
    <property type="protein sequence ID" value="ABM01450.1"/>
    <property type="molecule type" value="Genomic_DNA"/>
</dbReference>
<dbReference type="RefSeq" id="WP_011761354.1">
    <property type="nucleotide sequence ID" value="NC_008700.1"/>
</dbReference>
<dbReference type="SMR" id="A1SAP3"/>
<dbReference type="STRING" id="326297.Sama_3247"/>
<dbReference type="KEGG" id="saz:Sama_3247"/>
<dbReference type="eggNOG" id="COG4973">
    <property type="taxonomic scope" value="Bacteria"/>
</dbReference>
<dbReference type="HOGENOM" id="CLU_027562_9_0_6"/>
<dbReference type="OrthoDB" id="9801717at2"/>
<dbReference type="Proteomes" id="UP000009175">
    <property type="component" value="Chromosome"/>
</dbReference>
<dbReference type="GO" id="GO:0005737">
    <property type="term" value="C:cytoplasm"/>
    <property type="evidence" value="ECO:0007669"/>
    <property type="project" value="UniProtKB-SubCell"/>
</dbReference>
<dbReference type="GO" id="GO:0003677">
    <property type="term" value="F:DNA binding"/>
    <property type="evidence" value="ECO:0007669"/>
    <property type="project" value="UniProtKB-KW"/>
</dbReference>
<dbReference type="GO" id="GO:0009037">
    <property type="term" value="F:tyrosine-based site-specific recombinase activity"/>
    <property type="evidence" value="ECO:0007669"/>
    <property type="project" value="UniProtKB-UniRule"/>
</dbReference>
<dbReference type="GO" id="GO:0051301">
    <property type="term" value="P:cell division"/>
    <property type="evidence" value="ECO:0007669"/>
    <property type="project" value="UniProtKB-KW"/>
</dbReference>
<dbReference type="GO" id="GO:0007059">
    <property type="term" value="P:chromosome segregation"/>
    <property type="evidence" value="ECO:0007669"/>
    <property type="project" value="UniProtKB-UniRule"/>
</dbReference>
<dbReference type="GO" id="GO:0006313">
    <property type="term" value="P:DNA transposition"/>
    <property type="evidence" value="ECO:0007669"/>
    <property type="project" value="UniProtKB-UniRule"/>
</dbReference>
<dbReference type="CDD" id="cd00798">
    <property type="entry name" value="INT_XerDC_C"/>
    <property type="match status" value="1"/>
</dbReference>
<dbReference type="Gene3D" id="1.10.150.130">
    <property type="match status" value="1"/>
</dbReference>
<dbReference type="Gene3D" id="1.10.443.10">
    <property type="entry name" value="Intergrase catalytic core"/>
    <property type="match status" value="1"/>
</dbReference>
<dbReference type="HAMAP" id="MF_01808">
    <property type="entry name" value="Recomb_XerC_XerD"/>
    <property type="match status" value="1"/>
</dbReference>
<dbReference type="InterPro" id="IPR044068">
    <property type="entry name" value="CB"/>
</dbReference>
<dbReference type="InterPro" id="IPR011010">
    <property type="entry name" value="DNA_brk_join_enz"/>
</dbReference>
<dbReference type="InterPro" id="IPR013762">
    <property type="entry name" value="Integrase-like_cat_sf"/>
</dbReference>
<dbReference type="InterPro" id="IPR002104">
    <property type="entry name" value="Integrase_catalytic"/>
</dbReference>
<dbReference type="InterPro" id="IPR010998">
    <property type="entry name" value="Integrase_recombinase_N"/>
</dbReference>
<dbReference type="InterPro" id="IPR004107">
    <property type="entry name" value="Integrase_SAM-like_N"/>
</dbReference>
<dbReference type="InterPro" id="IPR011931">
    <property type="entry name" value="Recomb_XerC"/>
</dbReference>
<dbReference type="InterPro" id="IPR023009">
    <property type="entry name" value="Tyrosine_recombinase_XerC/XerD"/>
</dbReference>
<dbReference type="InterPro" id="IPR050090">
    <property type="entry name" value="Tyrosine_recombinase_XerCD"/>
</dbReference>
<dbReference type="NCBIfam" id="TIGR02224">
    <property type="entry name" value="recomb_XerC"/>
    <property type="match status" value="1"/>
</dbReference>
<dbReference type="PANTHER" id="PTHR30349">
    <property type="entry name" value="PHAGE INTEGRASE-RELATED"/>
    <property type="match status" value="1"/>
</dbReference>
<dbReference type="PANTHER" id="PTHR30349:SF81">
    <property type="entry name" value="TYROSINE RECOMBINASE XERC"/>
    <property type="match status" value="1"/>
</dbReference>
<dbReference type="Pfam" id="PF02899">
    <property type="entry name" value="Phage_int_SAM_1"/>
    <property type="match status" value="1"/>
</dbReference>
<dbReference type="Pfam" id="PF00589">
    <property type="entry name" value="Phage_integrase"/>
    <property type="match status" value="1"/>
</dbReference>
<dbReference type="SUPFAM" id="SSF56349">
    <property type="entry name" value="DNA breaking-rejoining enzymes"/>
    <property type="match status" value="1"/>
</dbReference>
<dbReference type="PROSITE" id="PS51900">
    <property type="entry name" value="CB"/>
    <property type="match status" value="1"/>
</dbReference>
<dbReference type="PROSITE" id="PS51898">
    <property type="entry name" value="TYR_RECOMBINASE"/>
    <property type="match status" value="1"/>
</dbReference>
<sequence>MADQASWLERFTRYLATERQLSPMTVRNYRFELERADTLLGQRSWQQLSRQDLSGLMARLHRQGLSPRSLSLTASALKQFGQFLLKEGLIDTNPAATLSAPKQSKTLPKNLDPDSVNHLLDIPPEDGLALRDKAIMELFYSCGLRLAELAALDVKDLDRESREVRVIGKGSKERILPVGSVALAAIGDWLKVRNQMPCQDDALFVSSRGSRLSHRSIQARMEKWAQIQGLSVGVHPHKLRHSFATHMLESSGDLRAVQELLGHANLATTQIYTSLDFQHLAKVYDGAHPRARKKGD</sequence>
<comment type="function">
    <text evidence="1">Site-specific tyrosine recombinase, which acts by catalyzing the cutting and rejoining of the recombining DNA molecules. The XerC-XerD complex is essential to convert dimers of the bacterial chromosome into monomers to permit their segregation at cell division. It also contributes to the segregational stability of plasmids.</text>
</comment>
<comment type="subunit">
    <text evidence="1">Forms a cyclic heterotetrameric complex composed of two molecules of XerC and two molecules of XerD.</text>
</comment>
<comment type="subcellular location">
    <subcellularLocation>
        <location evidence="1">Cytoplasm</location>
    </subcellularLocation>
</comment>
<comment type="similarity">
    <text evidence="1">Belongs to the 'phage' integrase family. XerC subfamily.</text>
</comment>